<gene>
    <name evidence="1" type="primary">petN</name>
    <name type="ordered locus">PMT9312_0748</name>
</gene>
<feature type="chain" id="PRO_1000049576" description="Cytochrome b6-f complex subunit 8">
    <location>
        <begin position="1"/>
        <end position="33"/>
    </location>
</feature>
<feature type="transmembrane region" description="Helical" evidence="1">
    <location>
        <begin position="2"/>
        <end position="22"/>
    </location>
</feature>
<keyword id="KW-0249">Electron transport</keyword>
<keyword id="KW-0472">Membrane</keyword>
<keyword id="KW-0602">Photosynthesis</keyword>
<keyword id="KW-0793">Thylakoid</keyword>
<keyword id="KW-0812">Transmembrane</keyword>
<keyword id="KW-1133">Transmembrane helix</keyword>
<keyword id="KW-0813">Transport</keyword>
<accession>Q31BD7</accession>
<dbReference type="EMBL" id="CP000111">
    <property type="protein sequence ID" value="ABB49808.1"/>
    <property type="molecule type" value="Genomic_DNA"/>
</dbReference>
<dbReference type="RefSeq" id="WP_011376303.1">
    <property type="nucleotide sequence ID" value="NC_007577.1"/>
</dbReference>
<dbReference type="SMR" id="Q31BD7"/>
<dbReference type="STRING" id="74546.PMT9312_0748"/>
<dbReference type="KEGG" id="pmi:PMT9312_0748"/>
<dbReference type="HOGENOM" id="CLU_215774_0_0_3"/>
<dbReference type="OrthoDB" id="560308at2"/>
<dbReference type="Proteomes" id="UP000002715">
    <property type="component" value="Chromosome"/>
</dbReference>
<dbReference type="GO" id="GO:0009512">
    <property type="term" value="C:cytochrome b6f complex"/>
    <property type="evidence" value="ECO:0007669"/>
    <property type="project" value="InterPro"/>
</dbReference>
<dbReference type="GO" id="GO:0031676">
    <property type="term" value="C:plasma membrane-derived thylakoid membrane"/>
    <property type="evidence" value="ECO:0007669"/>
    <property type="project" value="UniProtKB-SubCell"/>
</dbReference>
<dbReference type="GO" id="GO:0045158">
    <property type="term" value="F:electron transporter, transferring electrons within cytochrome b6/f complex of photosystem II activity"/>
    <property type="evidence" value="ECO:0007669"/>
    <property type="project" value="InterPro"/>
</dbReference>
<dbReference type="GO" id="GO:0017004">
    <property type="term" value="P:cytochrome complex assembly"/>
    <property type="evidence" value="ECO:0007669"/>
    <property type="project" value="UniProtKB-UniRule"/>
</dbReference>
<dbReference type="GO" id="GO:0015979">
    <property type="term" value="P:photosynthesis"/>
    <property type="evidence" value="ECO:0007669"/>
    <property type="project" value="UniProtKB-KW"/>
</dbReference>
<dbReference type="HAMAP" id="MF_00395">
    <property type="entry name" value="Cytb6_f_PetN"/>
    <property type="match status" value="1"/>
</dbReference>
<dbReference type="InterPro" id="IPR036143">
    <property type="entry name" value="Cytochr_b6-f_cplx_su8_sf"/>
</dbReference>
<dbReference type="InterPro" id="IPR005497">
    <property type="entry name" value="Cytochrome_b6-f_cplx_su8"/>
</dbReference>
<dbReference type="NCBIfam" id="NF002709">
    <property type="entry name" value="PRK02529.1"/>
    <property type="match status" value="1"/>
</dbReference>
<dbReference type="Pfam" id="PF03742">
    <property type="entry name" value="PetN"/>
    <property type="match status" value="1"/>
</dbReference>
<dbReference type="SUPFAM" id="SSF103451">
    <property type="entry name" value="PetN subunit of the cytochrome b6f complex"/>
    <property type="match status" value="1"/>
</dbReference>
<reference key="1">
    <citation type="journal article" date="2006" name="Science">
        <title>Genomic islands and the ecology and evolution of Prochlorococcus.</title>
        <authorList>
            <person name="Coleman M.L."/>
            <person name="Sullivan M.B."/>
            <person name="Martiny A.C."/>
            <person name="Steglich C."/>
            <person name="Barry K."/>
            <person name="Delong E.F."/>
            <person name="Chisholm S.W."/>
        </authorList>
    </citation>
    <scope>NUCLEOTIDE SEQUENCE [LARGE SCALE GENOMIC DNA]</scope>
    <source>
        <strain>MIT 9312</strain>
    </source>
</reference>
<organism>
    <name type="scientific">Prochlorococcus marinus (strain MIT 9312)</name>
    <dbReference type="NCBI Taxonomy" id="74546"/>
    <lineage>
        <taxon>Bacteria</taxon>
        <taxon>Bacillati</taxon>
        <taxon>Cyanobacteriota</taxon>
        <taxon>Cyanophyceae</taxon>
        <taxon>Synechococcales</taxon>
        <taxon>Prochlorococcaceae</taxon>
        <taxon>Prochlorococcus</taxon>
    </lineage>
</organism>
<proteinExistence type="inferred from homology"/>
<sequence length="33" mass="3572">MIFQIGWAALAAIFTFSIAMVVWGRNGDGSIDI</sequence>
<comment type="function">
    <text evidence="1">Component of the cytochrome b6-f complex, which mediates electron transfer between photosystem II (PSII) and photosystem I (PSI), cyclic electron flow around PSI, and state transitions.</text>
</comment>
<comment type="subunit">
    <text evidence="1">The 4 large subunits of the cytochrome b6-f complex are cytochrome b6, subunit IV (17 kDa polypeptide, PetD), cytochrome f and the Rieske protein, while the 4 small subunits are PetG, PetL, PetM and PetN. The complex functions as a dimer.</text>
</comment>
<comment type="subcellular location">
    <subcellularLocation>
        <location evidence="1">Cellular thylakoid membrane</location>
        <topology evidence="1">Single-pass membrane protein</topology>
    </subcellularLocation>
</comment>
<comment type="similarity">
    <text evidence="1">Belongs to the PetN family.</text>
</comment>
<name>PETN_PROM9</name>
<protein>
    <recommendedName>
        <fullName evidence="1">Cytochrome b6-f complex subunit 8</fullName>
    </recommendedName>
    <alternativeName>
        <fullName evidence="1">Cytochrome b6-f complex subunit PetN</fullName>
    </alternativeName>
    <alternativeName>
        <fullName evidence="1">Cytochrome b6-f complex subunit VIII</fullName>
    </alternativeName>
</protein>
<evidence type="ECO:0000255" key="1">
    <source>
        <dbReference type="HAMAP-Rule" id="MF_00395"/>
    </source>
</evidence>